<proteinExistence type="inferred from homology"/>
<keyword id="KW-0687">Ribonucleoprotein</keyword>
<keyword id="KW-0689">Ribosomal protein</keyword>
<keyword id="KW-0694">RNA-binding</keyword>
<keyword id="KW-0699">rRNA-binding</keyword>
<feature type="chain" id="PRO_1000086731" description="Large ribosomal subunit protein uL15">
    <location>
        <begin position="1"/>
        <end position="144"/>
    </location>
</feature>
<feature type="region of interest" description="Disordered" evidence="2">
    <location>
        <begin position="1"/>
        <end position="49"/>
    </location>
</feature>
<feature type="compositionally biased region" description="Gly residues" evidence="2">
    <location>
        <begin position="21"/>
        <end position="31"/>
    </location>
</feature>
<gene>
    <name evidence="1" type="primary">rplO</name>
    <name type="ordered locus">Shal_4115</name>
</gene>
<dbReference type="EMBL" id="CP000931">
    <property type="protein sequence ID" value="ABZ78655.1"/>
    <property type="molecule type" value="Genomic_DNA"/>
</dbReference>
<dbReference type="RefSeq" id="WP_012153473.1">
    <property type="nucleotide sequence ID" value="NC_010334.1"/>
</dbReference>
<dbReference type="SMR" id="B0TLZ3"/>
<dbReference type="STRING" id="458817.Shal_4115"/>
<dbReference type="KEGG" id="shl:Shal_4115"/>
<dbReference type="eggNOG" id="COG0200">
    <property type="taxonomic scope" value="Bacteria"/>
</dbReference>
<dbReference type="HOGENOM" id="CLU_055188_4_2_6"/>
<dbReference type="OrthoDB" id="9810293at2"/>
<dbReference type="Proteomes" id="UP000001317">
    <property type="component" value="Chromosome"/>
</dbReference>
<dbReference type="GO" id="GO:0022625">
    <property type="term" value="C:cytosolic large ribosomal subunit"/>
    <property type="evidence" value="ECO:0007669"/>
    <property type="project" value="TreeGrafter"/>
</dbReference>
<dbReference type="GO" id="GO:0019843">
    <property type="term" value="F:rRNA binding"/>
    <property type="evidence" value="ECO:0007669"/>
    <property type="project" value="UniProtKB-UniRule"/>
</dbReference>
<dbReference type="GO" id="GO:0003735">
    <property type="term" value="F:structural constituent of ribosome"/>
    <property type="evidence" value="ECO:0007669"/>
    <property type="project" value="InterPro"/>
</dbReference>
<dbReference type="GO" id="GO:0006412">
    <property type="term" value="P:translation"/>
    <property type="evidence" value="ECO:0007669"/>
    <property type="project" value="UniProtKB-UniRule"/>
</dbReference>
<dbReference type="FunFam" id="3.100.10.10:FF:000003">
    <property type="entry name" value="50S ribosomal protein L15"/>
    <property type="match status" value="1"/>
</dbReference>
<dbReference type="Gene3D" id="3.100.10.10">
    <property type="match status" value="1"/>
</dbReference>
<dbReference type="HAMAP" id="MF_01341">
    <property type="entry name" value="Ribosomal_uL15"/>
    <property type="match status" value="1"/>
</dbReference>
<dbReference type="InterPro" id="IPR030878">
    <property type="entry name" value="Ribosomal_uL15"/>
</dbReference>
<dbReference type="InterPro" id="IPR021131">
    <property type="entry name" value="Ribosomal_uL15/eL18"/>
</dbReference>
<dbReference type="InterPro" id="IPR036227">
    <property type="entry name" value="Ribosomal_uL15/eL18_sf"/>
</dbReference>
<dbReference type="InterPro" id="IPR005749">
    <property type="entry name" value="Ribosomal_uL15_bac-type"/>
</dbReference>
<dbReference type="InterPro" id="IPR001196">
    <property type="entry name" value="Ribosomal_uL15_CS"/>
</dbReference>
<dbReference type="NCBIfam" id="TIGR01071">
    <property type="entry name" value="rplO_bact"/>
    <property type="match status" value="1"/>
</dbReference>
<dbReference type="PANTHER" id="PTHR12934">
    <property type="entry name" value="50S RIBOSOMAL PROTEIN L15"/>
    <property type="match status" value="1"/>
</dbReference>
<dbReference type="PANTHER" id="PTHR12934:SF11">
    <property type="entry name" value="LARGE RIBOSOMAL SUBUNIT PROTEIN UL15M"/>
    <property type="match status" value="1"/>
</dbReference>
<dbReference type="Pfam" id="PF00828">
    <property type="entry name" value="Ribosomal_L27A"/>
    <property type="match status" value="1"/>
</dbReference>
<dbReference type="SUPFAM" id="SSF52080">
    <property type="entry name" value="Ribosomal proteins L15p and L18e"/>
    <property type="match status" value="1"/>
</dbReference>
<dbReference type="PROSITE" id="PS00475">
    <property type="entry name" value="RIBOSOMAL_L15"/>
    <property type="match status" value="1"/>
</dbReference>
<comment type="function">
    <text evidence="1">Binds to the 23S rRNA.</text>
</comment>
<comment type="subunit">
    <text evidence="1">Part of the 50S ribosomal subunit.</text>
</comment>
<comment type="similarity">
    <text evidence="1">Belongs to the universal ribosomal protein uL15 family.</text>
</comment>
<reference key="1">
    <citation type="submission" date="2008-01" db="EMBL/GenBank/DDBJ databases">
        <title>Complete sequence of Shewanella halifaxensis HAW-EB4.</title>
        <authorList>
            <consortium name="US DOE Joint Genome Institute"/>
            <person name="Copeland A."/>
            <person name="Lucas S."/>
            <person name="Lapidus A."/>
            <person name="Glavina del Rio T."/>
            <person name="Dalin E."/>
            <person name="Tice H."/>
            <person name="Bruce D."/>
            <person name="Goodwin L."/>
            <person name="Pitluck S."/>
            <person name="Sims D."/>
            <person name="Brettin T."/>
            <person name="Detter J.C."/>
            <person name="Han C."/>
            <person name="Kuske C.R."/>
            <person name="Schmutz J."/>
            <person name="Larimer F."/>
            <person name="Land M."/>
            <person name="Hauser L."/>
            <person name="Kyrpides N."/>
            <person name="Kim E."/>
            <person name="Zhao J.-S."/>
            <person name="Richardson P."/>
        </authorList>
    </citation>
    <scope>NUCLEOTIDE SEQUENCE [LARGE SCALE GENOMIC DNA]</scope>
    <source>
        <strain>HAW-EB4</strain>
    </source>
</reference>
<name>RL15_SHEHH</name>
<accession>B0TLZ3</accession>
<organism>
    <name type="scientific">Shewanella halifaxensis (strain HAW-EB4)</name>
    <dbReference type="NCBI Taxonomy" id="458817"/>
    <lineage>
        <taxon>Bacteria</taxon>
        <taxon>Pseudomonadati</taxon>
        <taxon>Pseudomonadota</taxon>
        <taxon>Gammaproteobacteria</taxon>
        <taxon>Alteromonadales</taxon>
        <taxon>Shewanellaceae</taxon>
        <taxon>Shewanella</taxon>
    </lineage>
</organism>
<evidence type="ECO:0000255" key="1">
    <source>
        <dbReference type="HAMAP-Rule" id="MF_01341"/>
    </source>
</evidence>
<evidence type="ECO:0000256" key="2">
    <source>
        <dbReference type="SAM" id="MobiDB-lite"/>
    </source>
</evidence>
<evidence type="ECO:0000305" key="3"/>
<sequence length="144" mass="14950">MRLNTLSPAAGAKSAAKRVGRGIGSGTGKTCGRGHKGQKSRSGGGVRVGFEGGQMPLKIRLPKFGFTSRKALVSAEIRISELAKVNGDVIDLNALKDANLVTRNIQFAKIVLSGTIERPVTVKGLKVTQGARAAIEAAGGKIEE</sequence>
<protein>
    <recommendedName>
        <fullName evidence="1">Large ribosomal subunit protein uL15</fullName>
    </recommendedName>
    <alternativeName>
        <fullName evidence="3">50S ribosomal protein L15</fullName>
    </alternativeName>
</protein>